<name>SPART_HUMAN</name>
<organism>
    <name type="scientific">Homo sapiens</name>
    <name type="common">Human</name>
    <dbReference type="NCBI Taxonomy" id="9606"/>
    <lineage>
        <taxon>Eukaryota</taxon>
        <taxon>Metazoa</taxon>
        <taxon>Chordata</taxon>
        <taxon>Craniata</taxon>
        <taxon>Vertebrata</taxon>
        <taxon>Euteleostomi</taxon>
        <taxon>Mammalia</taxon>
        <taxon>Eutheria</taxon>
        <taxon>Euarchontoglires</taxon>
        <taxon>Primates</taxon>
        <taxon>Haplorrhini</taxon>
        <taxon>Catarrhini</taxon>
        <taxon>Hominidae</taxon>
        <taxon>Homo</taxon>
    </lineage>
</organism>
<dbReference type="EMBL" id="AY123329">
    <property type="protein sequence ID" value="AAM76671.1"/>
    <property type="molecule type" value="mRNA"/>
</dbReference>
<dbReference type="EMBL" id="AY123337">
    <property type="protein sequence ID" value="AAM76672.1"/>
    <property type="molecule type" value="Genomic_DNA"/>
</dbReference>
<dbReference type="EMBL" id="AY123331">
    <property type="protein sequence ID" value="AAM76672.1"/>
    <property type="status" value="JOINED"/>
    <property type="molecule type" value="Genomic_DNA"/>
</dbReference>
<dbReference type="EMBL" id="AY123332">
    <property type="protein sequence ID" value="AAM76672.1"/>
    <property type="status" value="JOINED"/>
    <property type="molecule type" value="Genomic_DNA"/>
</dbReference>
<dbReference type="EMBL" id="AY123333">
    <property type="protein sequence ID" value="AAM76672.1"/>
    <property type="status" value="JOINED"/>
    <property type="molecule type" value="Genomic_DNA"/>
</dbReference>
<dbReference type="EMBL" id="AY123334">
    <property type="protein sequence ID" value="AAM76672.1"/>
    <property type="status" value="JOINED"/>
    <property type="molecule type" value="Genomic_DNA"/>
</dbReference>
<dbReference type="EMBL" id="AY123335">
    <property type="protein sequence ID" value="AAM76672.1"/>
    <property type="status" value="JOINED"/>
    <property type="molecule type" value="Genomic_DNA"/>
</dbReference>
<dbReference type="EMBL" id="AY123336">
    <property type="protein sequence ID" value="AAM76672.1"/>
    <property type="status" value="JOINED"/>
    <property type="molecule type" value="Genomic_DNA"/>
</dbReference>
<dbReference type="EMBL" id="AY038934">
    <property type="protein sequence ID" value="AAK71883.1"/>
    <property type="molecule type" value="Genomic_DNA"/>
</dbReference>
<dbReference type="EMBL" id="AY038359">
    <property type="protein sequence ID" value="AAK72374.1"/>
    <property type="molecule type" value="mRNA"/>
</dbReference>
<dbReference type="EMBL" id="AB011182">
    <property type="protein sequence ID" value="BAA25536.1"/>
    <property type="status" value="ALT_INIT"/>
    <property type="molecule type" value="mRNA"/>
</dbReference>
<dbReference type="EMBL" id="AL139377">
    <property type="status" value="NOT_ANNOTATED_CDS"/>
    <property type="molecule type" value="Genomic_DNA"/>
</dbReference>
<dbReference type="EMBL" id="BC047083">
    <property type="protein sequence ID" value="AAH47083.1"/>
    <property type="molecule type" value="mRNA"/>
</dbReference>
<dbReference type="CCDS" id="CCDS9356.1"/>
<dbReference type="PIR" id="T00255">
    <property type="entry name" value="T00255"/>
</dbReference>
<dbReference type="RefSeq" id="NP_001135766.1">
    <property type="nucleotide sequence ID" value="NM_001142294.2"/>
</dbReference>
<dbReference type="RefSeq" id="NP_001135767.1">
    <property type="nucleotide sequence ID" value="NM_001142295.2"/>
</dbReference>
<dbReference type="RefSeq" id="NP_001135768.1">
    <property type="nucleotide sequence ID" value="NM_001142296.2"/>
</dbReference>
<dbReference type="RefSeq" id="NP_055902.1">
    <property type="nucleotide sequence ID" value="NM_015087.5"/>
</dbReference>
<dbReference type="RefSeq" id="XP_005266370.1">
    <property type="nucleotide sequence ID" value="XM_005266313.6"/>
</dbReference>
<dbReference type="RefSeq" id="XP_005266371.1">
    <property type="nucleotide sequence ID" value="XM_005266314.4"/>
</dbReference>
<dbReference type="RefSeq" id="XP_005266372.1">
    <property type="nucleotide sequence ID" value="XM_005266315.4"/>
</dbReference>
<dbReference type="RefSeq" id="XP_005266374.1">
    <property type="nucleotide sequence ID" value="XM_005266317.4"/>
</dbReference>
<dbReference type="RefSeq" id="XP_011533314.1">
    <property type="nucleotide sequence ID" value="XM_011535012.3"/>
</dbReference>
<dbReference type="RefSeq" id="XP_024305102.1">
    <property type="nucleotide sequence ID" value="XM_024449334.2"/>
</dbReference>
<dbReference type="RefSeq" id="XP_047286165.1">
    <property type="nucleotide sequence ID" value="XM_047430209.1"/>
</dbReference>
<dbReference type="RefSeq" id="XP_047286166.1">
    <property type="nucleotide sequence ID" value="XM_047430210.1"/>
</dbReference>
<dbReference type="RefSeq" id="XP_047286167.1">
    <property type="nucleotide sequence ID" value="XM_047430211.1"/>
</dbReference>
<dbReference type="RefSeq" id="XP_047286168.1">
    <property type="nucleotide sequence ID" value="XM_047430212.1"/>
</dbReference>
<dbReference type="RefSeq" id="XP_047286169.1">
    <property type="nucleotide sequence ID" value="XM_047430213.1"/>
</dbReference>
<dbReference type="RefSeq" id="XP_054230273.1">
    <property type="nucleotide sequence ID" value="XM_054374298.1"/>
</dbReference>
<dbReference type="RefSeq" id="XP_054230274.1">
    <property type="nucleotide sequence ID" value="XM_054374299.1"/>
</dbReference>
<dbReference type="RefSeq" id="XP_054230275.1">
    <property type="nucleotide sequence ID" value="XM_054374300.1"/>
</dbReference>
<dbReference type="RefSeq" id="XP_054230276.1">
    <property type="nucleotide sequence ID" value="XM_054374301.1"/>
</dbReference>
<dbReference type="RefSeq" id="XP_054230277.1">
    <property type="nucleotide sequence ID" value="XM_054374302.1"/>
</dbReference>
<dbReference type="RefSeq" id="XP_054230278.1">
    <property type="nucleotide sequence ID" value="XM_054374303.1"/>
</dbReference>
<dbReference type="RefSeq" id="XP_054230279.1">
    <property type="nucleotide sequence ID" value="XM_054374304.1"/>
</dbReference>
<dbReference type="RefSeq" id="XP_054230280.1">
    <property type="nucleotide sequence ID" value="XM_054374305.1"/>
</dbReference>
<dbReference type="RefSeq" id="XP_054230281.1">
    <property type="nucleotide sequence ID" value="XM_054374306.1"/>
</dbReference>
<dbReference type="RefSeq" id="XP_054230282.1">
    <property type="nucleotide sequence ID" value="XM_054374307.1"/>
</dbReference>
<dbReference type="RefSeq" id="XP_054230283.1">
    <property type="nucleotide sequence ID" value="XM_054374308.1"/>
</dbReference>
<dbReference type="RefSeq" id="XP_054230284.1">
    <property type="nucleotide sequence ID" value="XM_054374309.1"/>
</dbReference>
<dbReference type="PDB" id="2DL1">
    <property type="method" value="NMR"/>
    <property type="chains" value="A=9-111"/>
</dbReference>
<dbReference type="PDB" id="4U7I">
    <property type="method" value="X-ray"/>
    <property type="resolution" value="1.79 A"/>
    <property type="chains" value="A=8-101"/>
</dbReference>
<dbReference type="PDBsum" id="2DL1"/>
<dbReference type="PDBsum" id="4U7I"/>
<dbReference type="SMR" id="Q8N0X7"/>
<dbReference type="BioGRID" id="116734">
    <property type="interactions" value="112"/>
</dbReference>
<dbReference type="FunCoup" id="Q8N0X7">
    <property type="interactions" value="1666"/>
</dbReference>
<dbReference type="IntAct" id="Q8N0X7">
    <property type="interactions" value="82"/>
</dbReference>
<dbReference type="MINT" id="Q8N0X7"/>
<dbReference type="STRING" id="9606.ENSP00000414147"/>
<dbReference type="GlyCosmos" id="Q8N0X7">
    <property type="glycosylation" value="1 site, 1 glycan"/>
</dbReference>
<dbReference type="GlyGen" id="Q8N0X7">
    <property type="glycosylation" value="2 sites, 1 O-linked glycan (1 site)"/>
</dbReference>
<dbReference type="iPTMnet" id="Q8N0X7"/>
<dbReference type="PhosphoSitePlus" id="Q8N0X7"/>
<dbReference type="SwissPalm" id="Q8N0X7"/>
<dbReference type="BioMuta" id="SPART"/>
<dbReference type="DMDM" id="50401600"/>
<dbReference type="jPOST" id="Q8N0X7"/>
<dbReference type="MassIVE" id="Q8N0X7"/>
<dbReference type="PaxDb" id="9606-ENSP00000414147"/>
<dbReference type="PeptideAtlas" id="Q8N0X7"/>
<dbReference type="ProteomicsDB" id="71485"/>
<dbReference type="Pumba" id="Q8N0X7"/>
<dbReference type="Antibodypedia" id="42112">
    <property type="antibodies" value="203 antibodies from 30 providers"/>
</dbReference>
<dbReference type="DNASU" id="23111"/>
<dbReference type="Ensembl" id="ENST00000355182.8">
    <property type="protein sequence ID" value="ENSP00000347314.4"/>
    <property type="gene ID" value="ENSG00000133104.14"/>
</dbReference>
<dbReference type="Ensembl" id="ENST00000438666.7">
    <property type="protein sequence ID" value="ENSP00000406061.2"/>
    <property type="gene ID" value="ENSG00000133104.14"/>
</dbReference>
<dbReference type="Ensembl" id="ENST00000451493.5">
    <property type="protein sequence ID" value="ENSP00000414147.1"/>
    <property type="gene ID" value="ENSG00000133104.14"/>
</dbReference>
<dbReference type="Ensembl" id="ENST00000494062.2">
    <property type="protein sequence ID" value="ENSP00000473599.1"/>
    <property type="gene ID" value="ENSG00000133104.14"/>
</dbReference>
<dbReference type="Ensembl" id="ENST00000650221.1">
    <property type="protein sequence ID" value="ENSP00000497209.1"/>
    <property type="gene ID" value="ENSG00000133104.14"/>
</dbReference>
<dbReference type="GeneID" id="23111"/>
<dbReference type="KEGG" id="hsa:23111"/>
<dbReference type="MANE-Select" id="ENST00000438666.7">
    <property type="protein sequence ID" value="ENSP00000406061.2"/>
    <property type="RefSeq nucleotide sequence ID" value="NM_015087.5"/>
    <property type="RefSeq protein sequence ID" value="NP_055902.1"/>
</dbReference>
<dbReference type="UCSC" id="uc001uvm.4">
    <property type="organism name" value="human"/>
</dbReference>
<dbReference type="AGR" id="HGNC:18514"/>
<dbReference type="CTD" id="23111"/>
<dbReference type="DisGeNET" id="23111"/>
<dbReference type="GeneCards" id="SPART"/>
<dbReference type="GeneReviews" id="SPART"/>
<dbReference type="HGNC" id="HGNC:18514">
    <property type="gene designation" value="SPART"/>
</dbReference>
<dbReference type="HPA" id="ENSG00000133104">
    <property type="expression patterns" value="Low tissue specificity"/>
</dbReference>
<dbReference type="MalaCards" id="SPART"/>
<dbReference type="MIM" id="275900">
    <property type="type" value="phenotype"/>
</dbReference>
<dbReference type="MIM" id="607111">
    <property type="type" value="gene"/>
</dbReference>
<dbReference type="neXtProt" id="NX_Q8N0X7"/>
<dbReference type="OpenTargets" id="ENSG00000133104"/>
<dbReference type="Orphanet" id="101000">
    <property type="disease" value="Autosomal recessive spastic paraplegia type 20"/>
</dbReference>
<dbReference type="PharmGKB" id="PA134871645"/>
<dbReference type="VEuPathDB" id="HostDB:ENSG00000133104"/>
<dbReference type="eggNOG" id="KOG2709">
    <property type="taxonomic scope" value="Eukaryota"/>
</dbReference>
<dbReference type="GeneTree" id="ENSGT00390000012235"/>
<dbReference type="HOGENOM" id="CLU_019310_0_0_1"/>
<dbReference type="InParanoid" id="Q8N0X7"/>
<dbReference type="OMA" id="WQGMECA"/>
<dbReference type="OrthoDB" id="20821at2759"/>
<dbReference type="PAN-GO" id="Q8N0X7">
    <property type="GO annotations" value="3 GO annotations based on evolutionary models"/>
</dbReference>
<dbReference type="PhylomeDB" id="Q8N0X7"/>
<dbReference type="TreeFam" id="TF105252"/>
<dbReference type="PathwayCommons" id="Q8N0X7"/>
<dbReference type="SignaLink" id="Q8N0X7"/>
<dbReference type="SIGNOR" id="Q8N0X7"/>
<dbReference type="BioGRID-ORCS" id="23111">
    <property type="hits" value="12 hits in 1169 CRISPR screens"/>
</dbReference>
<dbReference type="ChiTaRS" id="SPG20">
    <property type="organism name" value="human"/>
</dbReference>
<dbReference type="EvolutionaryTrace" id="Q8N0X7"/>
<dbReference type="GeneWiki" id="SPG20"/>
<dbReference type="GenomeRNAi" id="23111"/>
<dbReference type="Pharos" id="Q8N0X7">
    <property type="development level" value="Tbio"/>
</dbReference>
<dbReference type="PRO" id="PR:Q8N0X7"/>
<dbReference type="Proteomes" id="UP000005640">
    <property type="component" value="Chromosome 13"/>
</dbReference>
<dbReference type="RNAct" id="Q8N0X7">
    <property type="molecule type" value="protein"/>
</dbReference>
<dbReference type="Bgee" id="ENSG00000133104">
    <property type="expression patterns" value="Expressed in calcaneal tendon and 202 other cell types or tissues"/>
</dbReference>
<dbReference type="ExpressionAtlas" id="Q8N0X7">
    <property type="expression patterns" value="baseline and differential"/>
</dbReference>
<dbReference type="GO" id="GO:0005737">
    <property type="term" value="C:cytoplasm"/>
    <property type="evidence" value="ECO:0000314"/>
    <property type="project" value="UniProtKB"/>
</dbReference>
<dbReference type="GO" id="GO:0005829">
    <property type="term" value="C:cytosol"/>
    <property type="evidence" value="ECO:0000314"/>
    <property type="project" value="HPA"/>
</dbReference>
<dbReference type="GO" id="GO:0043231">
    <property type="term" value="C:intracellular membrane-bounded organelle"/>
    <property type="evidence" value="ECO:0000314"/>
    <property type="project" value="HPA"/>
</dbReference>
<dbReference type="GO" id="GO:0005811">
    <property type="term" value="C:lipid droplet"/>
    <property type="evidence" value="ECO:0000314"/>
    <property type="project" value="UniProtKB"/>
</dbReference>
<dbReference type="GO" id="GO:0030496">
    <property type="term" value="C:midbody"/>
    <property type="evidence" value="ECO:0000314"/>
    <property type="project" value="UniProtKB"/>
</dbReference>
<dbReference type="GO" id="GO:0005741">
    <property type="term" value="C:mitochondrial outer membrane"/>
    <property type="evidence" value="ECO:0000314"/>
    <property type="project" value="MGI"/>
</dbReference>
<dbReference type="GO" id="GO:0005886">
    <property type="term" value="C:plasma membrane"/>
    <property type="evidence" value="ECO:0000318"/>
    <property type="project" value="GO_Central"/>
</dbReference>
<dbReference type="GO" id="GO:0045202">
    <property type="term" value="C:synapse"/>
    <property type="evidence" value="ECO:0007669"/>
    <property type="project" value="Ensembl"/>
</dbReference>
<dbReference type="GO" id="GO:0008289">
    <property type="term" value="F:lipid binding"/>
    <property type="evidence" value="ECO:0000314"/>
    <property type="project" value="UniProtKB"/>
</dbReference>
<dbReference type="GO" id="GO:0031625">
    <property type="term" value="F:ubiquitin protein ligase binding"/>
    <property type="evidence" value="ECO:0000353"/>
    <property type="project" value="UniProtKB"/>
</dbReference>
<dbReference type="GO" id="GO:0060612">
    <property type="term" value="P:adipose tissue development"/>
    <property type="evidence" value="ECO:0007669"/>
    <property type="project" value="Ensembl"/>
</dbReference>
<dbReference type="GO" id="GO:0030509">
    <property type="term" value="P:BMP signaling pathway"/>
    <property type="evidence" value="ECO:0007669"/>
    <property type="project" value="Ensembl"/>
</dbReference>
<dbReference type="GO" id="GO:0051301">
    <property type="term" value="P:cell division"/>
    <property type="evidence" value="ECO:0000315"/>
    <property type="project" value="UniProtKB"/>
</dbReference>
<dbReference type="GO" id="GO:0048669">
    <property type="term" value="P:collateral sprouting in absence of injury"/>
    <property type="evidence" value="ECO:0007669"/>
    <property type="project" value="Ensembl"/>
</dbReference>
<dbReference type="GO" id="GO:0016042">
    <property type="term" value="P:lipid catabolic process"/>
    <property type="evidence" value="ECO:0007669"/>
    <property type="project" value="UniProtKB-KW"/>
</dbReference>
<dbReference type="GO" id="GO:0034389">
    <property type="term" value="P:lipid droplet organization"/>
    <property type="evidence" value="ECO:0007669"/>
    <property type="project" value="Ensembl"/>
</dbReference>
<dbReference type="GO" id="GO:0006869">
    <property type="term" value="P:lipid transport"/>
    <property type="evidence" value="ECO:0000314"/>
    <property type="project" value="UniProtKB"/>
</dbReference>
<dbReference type="GO" id="GO:0061724">
    <property type="term" value="P:lipophagy"/>
    <property type="evidence" value="ECO:0000315"/>
    <property type="project" value="UniProtKB"/>
</dbReference>
<dbReference type="GO" id="GO:0061952">
    <property type="term" value="P:midbody abscission"/>
    <property type="evidence" value="ECO:0000315"/>
    <property type="project" value="UniProtKB"/>
</dbReference>
<dbReference type="GO" id="GO:0030514">
    <property type="term" value="P:negative regulation of BMP signaling pathway"/>
    <property type="evidence" value="ECO:0000318"/>
    <property type="project" value="GO_Central"/>
</dbReference>
<dbReference type="GO" id="GO:0048698">
    <property type="term" value="P:negative regulation of collateral sprouting in absence of injury"/>
    <property type="evidence" value="ECO:0007669"/>
    <property type="project" value="Ensembl"/>
</dbReference>
<dbReference type="GO" id="GO:0050905">
    <property type="term" value="P:neuromuscular process"/>
    <property type="evidence" value="ECO:0007669"/>
    <property type="project" value="Ensembl"/>
</dbReference>
<dbReference type="GO" id="GO:0051881">
    <property type="term" value="P:regulation of mitochondrial membrane potential"/>
    <property type="evidence" value="ECO:0000315"/>
    <property type="project" value="MGI"/>
</dbReference>
<dbReference type="CDD" id="cd02679">
    <property type="entry name" value="MIT_spastin"/>
    <property type="match status" value="1"/>
</dbReference>
<dbReference type="FunFam" id="1.20.58.80:FF:000009">
    <property type="entry name" value="spartin isoform X1"/>
    <property type="match status" value="1"/>
</dbReference>
<dbReference type="Gene3D" id="1.20.58.80">
    <property type="entry name" value="Phosphotransferase system, lactose/cellobiose-type IIA subunit"/>
    <property type="match status" value="1"/>
</dbReference>
<dbReference type="InterPro" id="IPR007330">
    <property type="entry name" value="MIT_dom"/>
</dbReference>
<dbReference type="InterPro" id="IPR036181">
    <property type="entry name" value="MIT_dom_sf"/>
</dbReference>
<dbReference type="InterPro" id="IPR009686">
    <property type="entry name" value="Senescence/spartin_C"/>
</dbReference>
<dbReference type="InterPro" id="IPR045036">
    <property type="entry name" value="Spartin-like"/>
</dbReference>
<dbReference type="PANTHER" id="PTHR21068">
    <property type="entry name" value="SPARTIN"/>
    <property type="match status" value="1"/>
</dbReference>
<dbReference type="PANTHER" id="PTHR21068:SF43">
    <property type="entry name" value="SPARTIN"/>
    <property type="match status" value="1"/>
</dbReference>
<dbReference type="Pfam" id="PF06911">
    <property type="entry name" value="Senescence"/>
    <property type="match status" value="1"/>
</dbReference>
<dbReference type="SMART" id="SM00745">
    <property type="entry name" value="MIT"/>
    <property type="match status" value="1"/>
</dbReference>
<dbReference type="SUPFAM" id="SSF116846">
    <property type="entry name" value="MIT domain"/>
    <property type="match status" value="1"/>
</dbReference>
<sequence>MEQEPQNGEPAEIKIIREAYKKAFLFVNKGLNTDELGQKEEAKNYYKQGIGHLLRGISISSKESEHTGPGWESARQMQQKMKETLQNVRTRLEILEKGLATSLQNDLQEVPKLYPEFPPKDMCEKLPEPQSFSSAPQHAEVNGNTSTPSAGAVAAPASLSLPSQSCPAEAPPAYTPQAAEGHYTVSYGTDSGEFSSVGEEFYRNHSQPPPLETLGLDADELILIPNGVQIFFVNPAGEVSAPSYPGYLRIVRFLDNSLDTVLNRPPGFLQVCDWLYPLVPDRSPVLKCTAGAYMFPDTMLQAAGCFVGVVLSSELPEDDRELFEDLLRQMSDLRLQANWNRAEEENEFQIPGRTRPSSDQLKEASGTDVKQLDQGNKDVRHKGKRGKRAKDTSSEEVNLSHIVPCEPVPEEKPKELPEWSEKVAHNILSGASWVSWGLVKGAEITGKAIQKGASKLRERIQPEEKPVEVSPAVTKGLYIAKQATGGAAKVSQFLVDGVCTVANCVGKELAPHVKKHGSKLVPESLKKDKDGKSPLDGAMVVAASSVQGFSTVWQGLECAAKCIVNNVSAETVQTVRYKYGYNAGEATHHAVDSAVNVGVTAYNINNIGIKAMVKKTATQTGHTLLEDYQIVDNSQRENQEGAANVNVRGEKDEQTKEVKEAKKKDK</sequence>
<comment type="function">
    <text evidence="5 8 9">Lipophagy receptor that plays an important role in lipid droplet (LD) turnover in motor neurons (PubMed:37443287). Localizes to LDs and interacts with components of the autophagy machinery, such as MAP1LC3A/C proteins to deliver LDs to autophagosomes for degradation via lipophagy (PubMed:37443287). Lipid transfer protein required for lipid droplet degradation, including by lipophagy (PubMed:38190532). Can bind and transfer all lipid species found in lipid droplets, from phospholipids to triglycerides and sterol esters but the direction of lipid transfer by spartin and its cargos are unknown (PubMed:38190532). May be implicated in endosomal trafficking, or microtubule dynamics, or both. Participates in cytokinesis (PubMed:20719964).</text>
</comment>
<comment type="subunit">
    <text evidence="4 5 8">Interacts with ITCH and WWP1 (PubMed:19580544). Interacts (via MIT domain) with IST1; leading to the recruitment of SPART to midbodies (PubMed:20719964). Interacts with MAP1LC3A and MAP1LC3C (PubMed:37443287).</text>
</comment>
<comment type="interaction">
    <interactant intactId="EBI-2643803">
        <id>Q8N0X7</id>
    </interactant>
    <interactant intactId="EBI-12878374">
        <id>Q9BSY9</id>
        <label>DESI2</label>
    </interactant>
    <organismsDiffer>false</organismsDiffer>
    <experiments>3</experiments>
</comment>
<comment type="interaction">
    <interactant intactId="EBI-2643803">
        <id>Q8N0X7</id>
    </interactant>
    <interactant intactId="EBI-12135243">
        <id>O95208-2</id>
        <label>EPN2</label>
    </interactant>
    <organismsDiffer>false</organismsDiffer>
    <experiments>3</experiments>
</comment>
<comment type="interaction">
    <interactant intactId="EBI-2643803">
        <id>Q8N0X7</id>
    </interactant>
    <interactant intactId="EBI-473886">
        <id>O00291</id>
        <label>HIP1</label>
    </interactant>
    <organismsDiffer>false</organismsDiffer>
    <experiments>3</experiments>
</comment>
<comment type="interaction">
    <interactant intactId="EBI-2643803">
        <id>Q8N0X7</id>
    </interactant>
    <interactant intactId="EBI-21591415">
        <id>P13473-2</id>
        <label>LAMP2</label>
    </interactant>
    <organismsDiffer>false</organismsDiffer>
    <experiments>3</experiments>
</comment>
<comment type="interaction">
    <interactant intactId="EBI-2643803">
        <id>Q8N0X7</id>
    </interactant>
    <interactant intactId="EBI-746259">
        <id>Q96DC9</id>
        <label>OTUB2</label>
    </interactant>
    <organismsDiffer>false</organismsDiffer>
    <experiments>3</experiments>
</comment>
<comment type="interaction">
    <interactant intactId="EBI-2643803">
        <id>Q8N0X7</id>
    </interactant>
    <interactant intactId="EBI-527784">
        <id>Q6GQQ9</id>
        <label>OTUD7B</label>
    </interactant>
    <organismsDiffer>false</organismsDiffer>
    <experiments>3</experiments>
</comment>
<comment type="interaction">
    <interactant intactId="EBI-2643803">
        <id>Q8N0X7</id>
    </interactant>
    <interactant intactId="EBI-750730">
        <id>Q96BN8</id>
        <label>OTULIN</label>
    </interactant>
    <organismsDiffer>false</organismsDiffer>
    <experiments>3</experiments>
</comment>
<comment type="interaction">
    <interactant intactId="EBI-2643803">
        <id>Q8N0X7</id>
    </interactant>
    <interactant intactId="EBI-476431">
        <id>P10644</id>
        <label>PRKAR1A</label>
    </interactant>
    <organismsDiffer>false</organismsDiffer>
    <experiments>3</experiments>
</comment>
<comment type="interaction">
    <interactant intactId="EBI-2643803">
        <id>Q8N0X7</id>
    </interactant>
    <interactant intactId="EBI-14093916">
        <id>Q9UJ41-4</id>
        <label>RABGEF1</label>
    </interactant>
    <organismsDiffer>false</organismsDiffer>
    <experiments>3</experiments>
</comment>
<comment type="interaction">
    <interactant intactId="EBI-2643803">
        <id>Q8N0X7</id>
    </interactant>
    <interactant intactId="EBI-2623095">
        <id>Q9Y371</id>
        <label>SH3GLB1</label>
    </interactant>
    <organismsDiffer>false</organismsDiffer>
    <experiments>3</experiments>
</comment>
<comment type="interaction">
    <interactant intactId="EBI-2643803">
        <id>Q8N0X7</id>
    </interactant>
    <interactant intactId="EBI-749370">
        <id>Q9BSL1</id>
        <label>UBAC1</label>
    </interactant>
    <organismsDiffer>false</organismsDiffer>
    <experiments>3</experiments>
</comment>
<comment type="interaction">
    <interactant intactId="EBI-2643803">
        <id>Q8N0X7</id>
    </interactant>
    <interactant intactId="EBI-12072186">
        <id>P45974-2</id>
        <label>USP5</label>
    </interactant>
    <organismsDiffer>false</organismsDiffer>
    <experiments>3</experiments>
</comment>
<comment type="interaction">
    <interactant intactId="EBI-2643803">
        <id>Q8N0X7</id>
    </interactant>
    <interactant intactId="EBI-2510804">
        <id>Q5VVQ6</id>
        <label>YOD1</label>
    </interactant>
    <organismsDiffer>false</organismsDiffer>
    <experiments>3</experiments>
</comment>
<comment type="subcellular location">
    <subcellularLocation>
        <location evidence="4">Cytoplasm</location>
    </subcellularLocation>
    <subcellularLocation>
        <location evidence="5">Midbody</location>
    </subcellularLocation>
    <subcellularLocation>
        <location evidence="8 9">Lipid droplet</location>
    </subcellularLocation>
    <text evidence="4 5">Transiently associated with endosomes (PubMed:19580544). Colocalized with IST1 to the ends of Flemming bodies during cytokinesis (PubMed:20719964).</text>
</comment>
<comment type="tissue specificity">
    <text>Ubiquitously expressed, with highest levels of expression detected in adipose tissue.</text>
</comment>
<comment type="domain">
    <text evidence="9">The senescence domain is required and sufficient for lipid transfer.</text>
</comment>
<comment type="PTM">
    <text evidence="4 8">Ubiquitinated; ubiquitination does not require ITCH and WWP1.</text>
</comment>
<comment type="disease" evidence="3 6 7 9">
    <disease id="DI-01047">
        <name>Spastic paraplegia 20, autosomal recessive</name>
        <acronym>SPG20</acronym>
        <description>A form of spastic paraplegia, a neurodegenerative disorder characterized by a slow, gradual, progressive weakness and spasticity of the lower limbs. Rate of progression and the severity of symptoms are quite variable. Initial symptoms may include difficulty with balance, weakness and stiffness in the legs, muscle spasms, and dragging the toes when walking. In some forms of the disorder, bladder symptoms (such as incontinence) may appear, or the weakness and stiffness may spread to other parts of the body. SPG20 is characterized by dysarthria, distal amyotrophy, mild developmental delay and short stature.</description>
        <dbReference type="MIM" id="275900"/>
    </disease>
    <text>The disease is caused by variants affecting the gene represented in this entry.</text>
</comment>
<comment type="sequence caution" evidence="10">
    <conflict type="erroneous initiation">
        <sequence resource="EMBL-CDS" id="BAA25536"/>
    </conflict>
</comment>
<proteinExistence type="evidence at protein level"/>
<protein>
    <recommendedName>
        <fullName evidence="10">Spartin</fullName>
    </recommendedName>
    <alternativeName>
        <fullName>Spastic paraplegia 20 protein</fullName>
    </alternativeName>
    <alternativeName>
        <fullName>Trans-activated by hepatitis C virus core protein 1</fullName>
    </alternativeName>
</protein>
<gene>
    <name evidence="11" type="primary">SPART</name>
    <name type="synonym">KIAA0610</name>
    <name evidence="11" type="synonym">SPG20</name>
    <name type="synonym">TAHCCP1</name>
</gene>
<keyword id="KW-0002">3D-structure</keyword>
<keyword id="KW-0007">Acetylation</keyword>
<keyword id="KW-0963">Cytoplasm</keyword>
<keyword id="KW-0225">Disease variant</keyword>
<keyword id="KW-0890">Hereditary spastic paraplegia</keyword>
<keyword id="KW-1017">Isopeptide bond</keyword>
<keyword id="KW-0442">Lipid degradation</keyword>
<keyword id="KW-0551">Lipid droplet</keyword>
<keyword id="KW-0443">Lipid metabolism</keyword>
<keyword id="KW-0445">Lipid transport</keyword>
<keyword id="KW-0446">Lipid-binding</keyword>
<keyword id="KW-0523">Neurodegeneration</keyword>
<keyword id="KW-0597">Phosphoprotein</keyword>
<keyword id="KW-1267">Proteomics identification</keyword>
<keyword id="KW-1185">Reference proteome</keyword>
<keyword id="KW-0813">Transport</keyword>
<keyword id="KW-0832">Ubl conjugation</keyword>
<accession>Q8N0X7</accession>
<accession>O60349</accession>
<accession>Q86Y67</accession>
<accession>Q9H1T2</accession>
<accession>Q9H1T3</accession>
<feature type="chain" id="PRO_0000072119" description="Spartin">
    <location>
        <begin position="1"/>
        <end position="666"/>
    </location>
</feature>
<feature type="domain" description="MIT">
    <location>
        <begin position="16"/>
        <end position="94"/>
    </location>
</feature>
<feature type="domain" description="Senescence" evidence="1">
    <location>
        <begin position="427"/>
        <end position="611"/>
    </location>
</feature>
<feature type="region of interest" description="Disordered" evidence="2">
    <location>
        <begin position="124"/>
        <end position="156"/>
    </location>
</feature>
<feature type="region of interest" description="Ubiquitin-binding region (UBR) domain" evidence="8">
    <location>
        <begin position="190"/>
        <end position="380"/>
    </location>
</feature>
<feature type="region of interest" description="Disordered" evidence="2">
    <location>
        <begin position="344"/>
        <end position="398"/>
    </location>
</feature>
<feature type="region of interest" description="Required for localization to lipid droplets" evidence="8">
    <location>
        <begin position="431"/>
        <end position="503"/>
    </location>
</feature>
<feature type="region of interest" description="Disordered" evidence="2">
    <location>
        <begin position="636"/>
        <end position="666"/>
    </location>
</feature>
<feature type="short sequence motif" description="LC3-interacting region (LIR); mediates interaction with MAP1LC3A AND MAP1LC3C" evidence="8">
    <location>
        <begin position="193"/>
        <end position="200"/>
    </location>
</feature>
<feature type="compositionally biased region" description="Low complexity" evidence="2">
    <location>
        <begin position="146"/>
        <end position="156"/>
    </location>
</feature>
<feature type="compositionally biased region" description="Basic residues" evidence="2">
    <location>
        <begin position="379"/>
        <end position="388"/>
    </location>
</feature>
<feature type="compositionally biased region" description="Basic and acidic residues" evidence="2">
    <location>
        <begin position="648"/>
        <end position="666"/>
    </location>
</feature>
<feature type="modified residue" description="N-acetylmethionine" evidence="13 15">
    <location>
        <position position="1"/>
    </location>
</feature>
<feature type="modified residue" description="Phosphoserine" evidence="12 14 16">
    <location>
        <position position="470"/>
    </location>
</feature>
<feature type="cross-link" description="Glycyl lysine isopeptide (Lys-Gly) (interchain with G-Cter in ubiquitin)" evidence="4">
    <location>
        <position position="362"/>
    </location>
</feature>
<feature type="sequence variant" id="VAR_079569" description="In SPG20; significant decrease in protein expression; significantly reduced COX respiratory chain complex IV activity in muscle mitochondria; dbSNP:rs1399213398." evidence="6">
    <original>M</original>
    <variation>V</variation>
    <location>
        <position position="330"/>
    </location>
</feature>
<feature type="sequence variant" id="VAR_079570" description="In SPG20; uncertain significance; reduced lipid transfer ability; loss of localaization to lipid droplets." evidence="7 9">
    <original>A</original>
    <variation>P</variation>
    <location>
        <position position="442"/>
    </location>
</feature>
<feature type="mutagenesis site" description="Abolishes interaction with IST1. Does not localize to the midbody." evidence="5">
    <original>F</original>
    <variation>D</variation>
    <location>
        <position position="24"/>
    </location>
</feature>
<feature type="mutagenesis site" description="Abolishes interaction with ITCH and WWP1." evidence="4">
    <original>PPAY</original>
    <variation>AAAA</variation>
    <location>
        <begin position="171"/>
        <end position="174"/>
    </location>
</feature>
<feature type="mutagenesis site" description="Abolishes localization to lipid droplets; when associated with A-449; A-460; A-479; A-490 and A-501." evidence="8">
    <original>L</original>
    <variation>A</variation>
    <location>
        <position position="438"/>
    </location>
</feature>
<feature type="mutagenesis site" description="Abolishes localization to lipid droplets; when associated with A-438; A-460; A-479; A-490 and A-501." evidence="8">
    <original>I</original>
    <variation>A</variation>
    <location>
        <position position="449"/>
    </location>
</feature>
<feature type="mutagenesis site" description="Abolishes localization to lipid droplets; when associated with A-438; A-449; A-479; A-490 and A-501." evidence="8">
    <original>I</original>
    <variation>A</variation>
    <location>
        <position position="460"/>
    </location>
</feature>
<feature type="mutagenesis site" description="Abolishes localization to lipid droplets; when associated with A-438; A-449; A-460; A-490 and A-501." evidence="8">
    <original>I</original>
    <variation>A</variation>
    <location>
        <position position="479"/>
    </location>
</feature>
<feature type="mutagenesis site" description="Abolishes localization to lipid droplets; when associated with A-438; A-449; A-460; A-479 and A-501." evidence="8">
    <original>V</original>
    <variation>A</variation>
    <location>
        <position position="490"/>
    </location>
</feature>
<feature type="mutagenesis site" description="Abolishes localization to lipid droplets; when associated with A-438; A-449; A-460; A-479 and A-490." evidence="8">
    <original>V</original>
    <variation>A</variation>
    <location>
        <position position="501"/>
    </location>
</feature>
<feature type="sequence conflict" description="In Ref. 5; AAH47083." evidence="10" ref="5">
    <original>P</original>
    <variation>T</variation>
    <location>
        <position position="69"/>
    </location>
</feature>
<feature type="sequence conflict" description="In Ref. 5; AAH47083." evidence="10" ref="5">
    <original>P</original>
    <variation>H</variation>
    <location>
        <position position="417"/>
    </location>
</feature>
<feature type="helix" evidence="17">
    <location>
        <begin position="11"/>
        <end position="35"/>
    </location>
</feature>
<feature type="helix" evidence="17">
    <location>
        <begin position="39"/>
        <end position="57"/>
    </location>
</feature>
<feature type="helix" evidence="17">
    <location>
        <begin position="69"/>
        <end position="96"/>
    </location>
</feature>
<reference key="1">
    <citation type="journal article" date="2002" name="Nat. Genet.">
        <title>SPG20 is mutated in Troyer syndrome, an hereditary spastic paraplegia.</title>
        <authorList>
            <person name="Patel H."/>
            <person name="Cross H."/>
            <person name="Proukakis C."/>
            <person name="Hershberger R."/>
            <person name="Bork P."/>
            <person name="Ciccarelli F.D."/>
            <person name="Patton M.A."/>
            <person name="McKusick V.A."/>
            <person name="Crosby A.H."/>
        </authorList>
    </citation>
    <scope>NUCLEOTIDE SEQUENCE [GENOMIC DNA / MRNA]</scope>
    <scope>INVOLVEMENT IN SPG20</scope>
</reference>
<reference key="2">
    <citation type="submission" date="2001-06" db="EMBL/GenBank/DDBJ databases">
        <title>Identification of the genomic DNA structure for a gene trans-activated by hepatitis C virus core protein 1.</title>
        <authorList>
            <person name="Liu Y."/>
            <person name="Cheng J."/>
            <person name="Wang G."/>
            <person name="Dong J."/>
            <person name="Li K."/>
            <person name="Li L."/>
            <person name="Zhang L."/>
        </authorList>
    </citation>
    <scope>NUCLEOTIDE SEQUENCE [GENOMIC DNA / MRNA]</scope>
</reference>
<reference key="3">
    <citation type="journal article" date="1998" name="DNA Res.">
        <title>Prediction of the coding sequences of unidentified human genes. IX. The complete sequences of 100 new cDNA clones from brain which can code for large proteins in vitro.</title>
        <authorList>
            <person name="Nagase T."/>
            <person name="Ishikawa K."/>
            <person name="Miyajima N."/>
            <person name="Tanaka A."/>
            <person name="Kotani H."/>
            <person name="Nomura N."/>
            <person name="Ohara O."/>
        </authorList>
    </citation>
    <scope>NUCLEOTIDE SEQUENCE [LARGE SCALE MRNA]</scope>
    <source>
        <tissue>Brain</tissue>
    </source>
</reference>
<reference key="4">
    <citation type="journal article" date="2004" name="Nature">
        <title>The DNA sequence and analysis of human chromosome 13.</title>
        <authorList>
            <person name="Dunham A."/>
            <person name="Matthews L.H."/>
            <person name="Burton J."/>
            <person name="Ashurst J.L."/>
            <person name="Howe K.L."/>
            <person name="Ashcroft K.J."/>
            <person name="Beare D.M."/>
            <person name="Burford D.C."/>
            <person name="Hunt S.E."/>
            <person name="Griffiths-Jones S."/>
            <person name="Jones M.C."/>
            <person name="Keenan S.J."/>
            <person name="Oliver K."/>
            <person name="Scott C.E."/>
            <person name="Ainscough R."/>
            <person name="Almeida J.P."/>
            <person name="Ambrose K.D."/>
            <person name="Andrews D.T."/>
            <person name="Ashwell R.I.S."/>
            <person name="Babbage A.K."/>
            <person name="Bagguley C.L."/>
            <person name="Bailey J."/>
            <person name="Bannerjee R."/>
            <person name="Barlow K.F."/>
            <person name="Bates K."/>
            <person name="Beasley H."/>
            <person name="Bird C.P."/>
            <person name="Bray-Allen S."/>
            <person name="Brown A.J."/>
            <person name="Brown J.Y."/>
            <person name="Burrill W."/>
            <person name="Carder C."/>
            <person name="Carter N.P."/>
            <person name="Chapman J.C."/>
            <person name="Clamp M.E."/>
            <person name="Clark S.Y."/>
            <person name="Clarke G."/>
            <person name="Clee C.M."/>
            <person name="Clegg S.C."/>
            <person name="Cobley V."/>
            <person name="Collins J.E."/>
            <person name="Corby N."/>
            <person name="Coville G.J."/>
            <person name="Deloukas P."/>
            <person name="Dhami P."/>
            <person name="Dunham I."/>
            <person name="Dunn M."/>
            <person name="Earthrowl M.E."/>
            <person name="Ellington A.G."/>
            <person name="Faulkner L."/>
            <person name="Frankish A.G."/>
            <person name="Frankland J."/>
            <person name="French L."/>
            <person name="Garner P."/>
            <person name="Garnett J."/>
            <person name="Gilbert J.G.R."/>
            <person name="Gilson C.J."/>
            <person name="Ghori J."/>
            <person name="Grafham D.V."/>
            <person name="Gribble S.M."/>
            <person name="Griffiths C."/>
            <person name="Hall R.E."/>
            <person name="Hammond S."/>
            <person name="Harley J.L."/>
            <person name="Hart E.A."/>
            <person name="Heath P.D."/>
            <person name="Howden P.J."/>
            <person name="Huckle E.J."/>
            <person name="Hunt P.J."/>
            <person name="Hunt A.R."/>
            <person name="Johnson C."/>
            <person name="Johnson D."/>
            <person name="Kay M."/>
            <person name="Kimberley A.M."/>
            <person name="King A."/>
            <person name="Laird G.K."/>
            <person name="Langford C.J."/>
            <person name="Lawlor S."/>
            <person name="Leongamornlert D.A."/>
            <person name="Lloyd D.M."/>
            <person name="Lloyd C."/>
            <person name="Loveland J.E."/>
            <person name="Lovell J."/>
            <person name="Martin S."/>
            <person name="Mashreghi-Mohammadi M."/>
            <person name="McLaren S.J."/>
            <person name="McMurray A."/>
            <person name="Milne S."/>
            <person name="Moore M.J.F."/>
            <person name="Nickerson T."/>
            <person name="Palmer S.A."/>
            <person name="Pearce A.V."/>
            <person name="Peck A.I."/>
            <person name="Pelan S."/>
            <person name="Phillimore B."/>
            <person name="Porter K.M."/>
            <person name="Rice C.M."/>
            <person name="Searle S."/>
            <person name="Sehra H.K."/>
            <person name="Shownkeen R."/>
            <person name="Skuce C.D."/>
            <person name="Smith M."/>
            <person name="Steward C.A."/>
            <person name="Sycamore N."/>
            <person name="Tester J."/>
            <person name="Thomas D.W."/>
            <person name="Tracey A."/>
            <person name="Tromans A."/>
            <person name="Tubby B."/>
            <person name="Wall M."/>
            <person name="Wallis J.M."/>
            <person name="West A.P."/>
            <person name="Whitehead S.L."/>
            <person name="Willey D.L."/>
            <person name="Wilming L."/>
            <person name="Wray P.W."/>
            <person name="Wright M.W."/>
            <person name="Young L."/>
            <person name="Coulson A."/>
            <person name="Durbin R.M."/>
            <person name="Hubbard T."/>
            <person name="Sulston J.E."/>
            <person name="Beck S."/>
            <person name="Bentley D.R."/>
            <person name="Rogers J."/>
            <person name="Ross M.T."/>
        </authorList>
    </citation>
    <scope>NUCLEOTIDE SEQUENCE [LARGE SCALE GENOMIC DNA]</scope>
</reference>
<reference key="5">
    <citation type="journal article" date="2004" name="Genome Res.">
        <title>The status, quality, and expansion of the NIH full-length cDNA project: the Mammalian Gene Collection (MGC).</title>
        <authorList>
            <consortium name="The MGC Project Team"/>
        </authorList>
    </citation>
    <scope>NUCLEOTIDE SEQUENCE [LARGE SCALE MRNA]</scope>
    <source>
        <tissue>Brain</tissue>
    </source>
</reference>
<reference key="6">
    <citation type="journal article" date="2003" name="Genomics">
        <title>The identification of a conserved domain in both spartin and spastin, mutated in hereditary spastic paraplegia.</title>
        <authorList>
            <person name="Ciccarelli F.D."/>
            <person name="Proukakis C."/>
            <person name="Patel H."/>
            <person name="Cross H."/>
            <person name="Azam S."/>
            <person name="Patton M.A."/>
            <person name="Bork P."/>
            <person name="Crosby A.H."/>
        </authorList>
    </citation>
    <scope>DOMAIN MIT</scope>
    <scope>PROBABLE FUNCTION</scope>
</reference>
<reference key="7">
    <citation type="journal article" date="2008" name="Proc. Natl. Acad. Sci. U.S.A.">
        <title>A quantitative atlas of mitotic phosphorylation.</title>
        <authorList>
            <person name="Dephoure N."/>
            <person name="Zhou C."/>
            <person name="Villen J."/>
            <person name="Beausoleil S.A."/>
            <person name="Bakalarski C.E."/>
            <person name="Elledge S.J."/>
            <person name="Gygi S.P."/>
        </authorList>
    </citation>
    <scope>PHOSPHORYLATION [LARGE SCALE ANALYSIS] AT SER-470</scope>
    <scope>IDENTIFICATION BY MASS SPECTROMETRY [LARGE SCALE ANALYSIS]</scope>
    <source>
        <tissue>Cervix carcinoma</tissue>
    </source>
</reference>
<reference key="8">
    <citation type="journal article" date="2009" name="Anal. Chem.">
        <title>Lys-N and trypsin cover complementary parts of the phosphoproteome in a refined SCX-based approach.</title>
        <authorList>
            <person name="Gauci S."/>
            <person name="Helbig A.O."/>
            <person name="Slijper M."/>
            <person name="Krijgsveld J."/>
            <person name="Heck A.J."/>
            <person name="Mohammed S."/>
        </authorList>
    </citation>
    <scope>ACETYLATION [LARGE SCALE ANALYSIS] AT MET-1</scope>
    <scope>IDENTIFICATION BY MASS SPECTROMETRY [LARGE SCALE ANALYSIS]</scope>
</reference>
<reference key="9">
    <citation type="journal article" date="2009" name="Biochem. J.">
        <title>Endogenous spartin (SPG20) is recruited to endosomes and lipid droplets and interacts with the ubiquitin E3 ligases AIP4 and AIP5.</title>
        <authorList>
            <person name="Edwards T.L."/>
            <person name="Clowes V.E."/>
            <person name="Tsang H.T."/>
            <person name="Connell J.W."/>
            <person name="Sanderson C.M."/>
            <person name="Luzio J.P."/>
            <person name="Reid E."/>
        </authorList>
    </citation>
    <scope>UBIQUITINATION</scope>
    <scope>SUBCELLULAR LOCATION</scope>
    <scope>INTERACTION WITH ITCH AND WWP1</scope>
    <scope>MUTAGENESIS OF 171-PRO--TYR-174</scope>
</reference>
<reference key="10">
    <citation type="journal article" date="2010" name="Mol. Biol. Cell">
        <title>SPG20 protein spartin is recruited to midbodies by ESCRT-III protein Ist1 and participates in cytokinesis.</title>
        <authorList>
            <person name="Renvoise B."/>
            <person name="Parker R.L."/>
            <person name="Yang D."/>
            <person name="Bakowska J.C."/>
            <person name="Hurley J.H."/>
            <person name="Blackstone C."/>
        </authorList>
    </citation>
    <scope>INTERACTION WITH IST1</scope>
    <scope>SUBCELLULAR LOCATION</scope>
    <scope>MUTAGENESIS OF PHE-24</scope>
    <scope>FUNCTION</scope>
</reference>
<reference key="11">
    <citation type="journal article" date="2010" name="Sci. Signal.">
        <title>Quantitative phosphoproteomics reveals widespread full phosphorylation site occupancy during mitosis.</title>
        <authorList>
            <person name="Olsen J.V."/>
            <person name="Vermeulen M."/>
            <person name="Santamaria A."/>
            <person name="Kumar C."/>
            <person name="Miller M.L."/>
            <person name="Jensen L.J."/>
            <person name="Gnad F."/>
            <person name="Cox J."/>
            <person name="Jensen T.S."/>
            <person name="Nigg E.A."/>
            <person name="Brunak S."/>
            <person name="Mann M."/>
        </authorList>
    </citation>
    <scope>PHOSPHORYLATION [LARGE SCALE ANALYSIS] AT SER-470</scope>
    <scope>IDENTIFICATION BY MASS SPECTROMETRY [LARGE SCALE ANALYSIS]</scope>
    <source>
        <tissue>Cervix carcinoma</tissue>
    </source>
</reference>
<reference key="12">
    <citation type="journal article" date="2011" name="BMC Syst. Biol.">
        <title>Initial characterization of the human central proteome.</title>
        <authorList>
            <person name="Burkard T.R."/>
            <person name="Planyavsky M."/>
            <person name="Kaupe I."/>
            <person name="Breitwieser F.P."/>
            <person name="Buerckstuemmer T."/>
            <person name="Bennett K.L."/>
            <person name="Superti-Furga G."/>
            <person name="Colinge J."/>
        </authorList>
    </citation>
    <scope>IDENTIFICATION BY MASS SPECTROMETRY [LARGE SCALE ANALYSIS]</scope>
</reference>
<reference key="13">
    <citation type="journal article" date="2012" name="Proc. Natl. Acad. Sci. U.S.A.">
        <title>N-terminal acetylome analyses and functional insights of the N-terminal acetyltransferase NatB.</title>
        <authorList>
            <person name="Van Damme P."/>
            <person name="Lasa M."/>
            <person name="Polevoda B."/>
            <person name="Gazquez C."/>
            <person name="Elosegui-Artola A."/>
            <person name="Kim D.S."/>
            <person name="De Juan-Pardo E."/>
            <person name="Demeyer K."/>
            <person name="Hole K."/>
            <person name="Larrea E."/>
            <person name="Timmerman E."/>
            <person name="Prieto J."/>
            <person name="Arnesen T."/>
            <person name="Sherman F."/>
            <person name="Gevaert K."/>
            <person name="Aldabe R."/>
        </authorList>
    </citation>
    <scope>ACETYLATION [LARGE SCALE ANALYSIS] AT MET-1</scope>
    <scope>IDENTIFICATION BY MASS SPECTROMETRY [LARGE SCALE ANALYSIS]</scope>
</reference>
<reference key="14">
    <citation type="journal article" date="2013" name="J. Proteome Res.">
        <title>Toward a comprehensive characterization of a human cancer cell phosphoproteome.</title>
        <authorList>
            <person name="Zhou H."/>
            <person name="Di Palma S."/>
            <person name="Preisinger C."/>
            <person name="Peng M."/>
            <person name="Polat A.N."/>
            <person name="Heck A.J."/>
            <person name="Mohammed S."/>
        </authorList>
    </citation>
    <scope>PHOSPHORYLATION [LARGE SCALE ANALYSIS] AT SER-470</scope>
    <scope>IDENTIFICATION BY MASS SPECTROMETRY [LARGE SCALE ANALYSIS]</scope>
    <source>
        <tissue>Cervix carcinoma</tissue>
        <tissue>Erythroleukemia</tissue>
    </source>
</reference>
<reference key="15">
    <citation type="journal article" date="2015" name="Proteomics">
        <title>N-terminome analysis of the human mitochondrial proteome.</title>
        <authorList>
            <person name="Vaca Jacome A.S."/>
            <person name="Rabilloud T."/>
            <person name="Schaeffer-Reiss C."/>
            <person name="Rompais M."/>
            <person name="Ayoub D."/>
            <person name="Lane L."/>
            <person name="Bairoch A."/>
            <person name="Van Dorsselaer A."/>
            <person name="Carapito C."/>
        </authorList>
    </citation>
    <scope>IDENTIFICATION BY MASS SPECTROMETRY [LARGE SCALE ANALYSIS]</scope>
</reference>
<reference key="16">
    <citation type="journal article" date="2023" name="Nat. Cell Biol.">
        <title>The Troyer syndrome protein spartin mediates selective autophagy of lipid droplets.</title>
        <authorList>
            <person name="Chung J."/>
            <person name="Park J."/>
            <person name="Lai Z.W."/>
            <person name="Lambert T.J."/>
            <person name="Richards R.C."/>
            <person name="Zhang J."/>
            <person name="Walther T.C."/>
            <person name="Farese R.V. Jr."/>
        </authorList>
    </citation>
    <scope>FUNCTION</scope>
    <scope>SUBCELLULAR LOCATION</scope>
    <scope>MOTIF LIR</scope>
    <scope>REGION UBR</scope>
    <scope>INTERACTION WITH MAP1LC3A AND MAP1LC3C</scope>
    <scope>MUTAGENESIS OF LEU-438; ILE-449; ILE-460; ILE-479; VAL-490 AND VAL-501</scope>
    <scope>UBIQUITINATION</scope>
</reference>
<reference key="17">
    <citation type="submission" date="2006-10" db="PDB data bank">
        <title>Solution structure of the MIT domain from human spartin.</title>
        <authorList>
            <consortium name="RIKEN structural genomics initiative (RSGI)"/>
        </authorList>
    </citation>
    <scope>STRUCTURE BY NMR OF 8-111</scope>
</reference>
<reference key="18">
    <citation type="journal article" date="2017" name="JIMD Rep.">
        <title>Novel homozygous missense mutation in SPG20 gene results in Troyer syndrome associated with mitochondrial cytochrome c oxidase deficiency.</title>
        <authorList>
            <person name="Spiegel R."/>
            <person name="Soiferman D."/>
            <person name="Shaag A."/>
            <person name="Shalev S."/>
            <person name="Elpeleg O."/>
            <person name="Saada A."/>
        </authorList>
    </citation>
    <scope>VARIANT SPG20 VAL-330</scope>
    <scope>CHARACTERIZATION OF VARIANT SPG20 VAL-330</scope>
</reference>
<reference key="19">
    <citation type="journal article" date="2017" name="Metab. Brain Dis.">
        <title>Novel SPG20 mutation in an extended family with Troyer syndrome.</title>
        <authorList>
            <person name="Bizzari S."/>
            <person name="Hamzeh A.R."/>
            <person name="Nair P."/>
            <person name="Mohamed M."/>
            <person name="Saif F."/>
            <person name="Aithala G."/>
            <person name="Al-Ali M.T."/>
            <person name="Bastaki F."/>
        </authorList>
    </citation>
    <scope>VARIANT SPG20 PRO-442</scope>
</reference>
<reference key="20">
    <citation type="journal article" date="2024" name="Proc. Natl. Acad. Sci. U.S.A.">
        <title>Spartin-mediated lipid transfer facilitates lipid droplet turnover.</title>
        <authorList>
            <person name="Wan N."/>
            <person name="Hong Z."/>
            <person name="Parson M.A.H."/>
            <person name="Korfhage J.L."/>
            <person name="Burke J.E."/>
            <person name="Melia T.J."/>
            <person name="Reinisch K.M."/>
        </authorList>
    </citation>
    <scope>CHARACTERIZATION OF VARIANT SPG20 PRO-442</scope>
    <scope>FUNCTION</scope>
    <scope>DOMAIN SENESCENCE</scope>
    <scope>SUBCELLULAR LOCATION</scope>
</reference>
<evidence type="ECO:0000255" key="1"/>
<evidence type="ECO:0000256" key="2">
    <source>
        <dbReference type="SAM" id="MobiDB-lite"/>
    </source>
</evidence>
<evidence type="ECO:0000269" key="3">
    <source>
    </source>
</evidence>
<evidence type="ECO:0000269" key="4">
    <source>
    </source>
</evidence>
<evidence type="ECO:0000269" key="5">
    <source>
    </source>
</evidence>
<evidence type="ECO:0000269" key="6">
    <source>
    </source>
</evidence>
<evidence type="ECO:0000269" key="7">
    <source>
    </source>
</evidence>
<evidence type="ECO:0000269" key="8">
    <source>
    </source>
</evidence>
<evidence type="ECO:0000269" key="9">
    <source>
    </source>
</evidence>
<evidence type="ECO:0000305" key="10"/>
<evidence type="ECO:0000312" key="11">
    <source>
        <dbReference type="HGNC" id="HGNC:18514"/>
    </source>
</evidence>
<evidence type="ECO:0007744" key="12">
    <source>
    </source>
</evidence>
<evidence type="ECO:0007744" key="13">
    <source>
    </source>
</evidence>
<evidence type="ECO:0007744" key="14">
    <source>
    </source>
</evidence>
<evidence type="ECO:0007744" key="15">
    <source>
    </source>
</evidence>
<evidence type="ECO:0007744" key="16">
    <source>
    </source>
</evidence>
<evidence type="ECO:0007829" key="17">
    <source>
        <dbReference type="PDB" id="4U7I"/>
    </source>
</evidence>